<sequence>MTEPQEQLLQLQKDNRDGRLRKQELEELVRGLEAESESLTGRLEELRERERSLQRRRSQASRAIRGEACEAARERAERARGLLEAAEQHRQDLEQHNRKLQEQWEELSSQLFYYGGEQLSQQRAEQQLGNQLVALQKHLELAEAKFSMQAEDLRQGAQRTEEAWASFQEQSGVLQELQGKVMEAAAALEATRGGSEPWNSEPRPVQDCAGSLMEEVARADCEKRLFGGTGAGSLRLWALSALQTLLLLPLGFLVLPLIYVVLAKPDAVGPGLQSLGSDAVFRRLRYTLSPLLELRARGLLPA</sequence>
<keyword id="KW-0025">Alternative splicing</keyword>
<keyword id="KW-0175">Coiled coil</keyword>
<keyword id="KW-0472">Membrane</keyword>
<keyword id="KW-1185">Reference proteome</keyword>
<keyword id="KW-0812">Transmembrane</keyword>
<keyword id="KW-1133">Transmembrane helix</keyword>
<dbReference type="EMBL" id="AB041601">
    <property type="protein sequence ID" value="BAA95084.1"/>
    <property type="molecule type" value="mRNA"/>
</dbReference>
<dbReference type="EMBL" id="AC110573">
    <property type="status" value="NOT_ANNOTATED_CDS"/>
    <property type="molecule type" value="Genomic_DNA"/>
</dbReference>
<dbReference type="CCDS" id="CCDS49776.1">
    <molecule id="Q9JJB1-1"/>
</dbReference>
<dbReference type="RefSeq" id="NP_803424.2">
    <molecule id="Q9JJB1-1"/>
    <property type="nucleotide sequence ID" value="NM_177473.3"/>
</dbReference>
<dbReference type="SMR" id="Q9JJB1"/>
<dbReference type="STRING" id="10090.ENSMUSP00000131127"/>
<dbReference type="iPTMnet" id="Q9JJB1"/>
<dbReference type="PhosphoSitePlus" id="Q9JJB1"/>
<dbReference type="SwissPalm" id="Q9JJB1"/>
<dbReference type="PaxDb" id="10090-ENSMUSP00000131127"/>
<dbReference type="ProteomicsDB" id="254530">
    <molecule id="Q9JJB1-1"/>
</dbReference>
<dbReference type="ProteomicsDB" id="254531">
    <molecule id="Q9JJB1-2"/>
</dbReference>
<dbReference type="Ensembl" id="ENSMUST00000164950.11">
    <molecule id="Q9JJB1-1"/>
    <property type="protein sequence ID" value="ENSMUSP00000131127.2"/>
    <property type="gene ID" value="ENSMUSG00000055692.22"/>
</dbReference>
<dbReference type="GeneID" id="224019"/>
<dbReference type="KEGG" id="mmu:224019"/>
<dbReference type="UCSC" id="uc007ykp.1">
    <property type="organism name" value="mouse"/>
</dbReference>
<dbReference type="AGR" id="MGI:107238"/>
<dbReference type="CTD" id="224019"/>
<dbReference type="MGI" id="MGI:107238">
    <property type="gene designation" value="Tmem191"/>
</dbReference>
<dbReference type="VEuPathDB" id="HostDB:ENSMUSG00000055692"/>
<dbReference type="eggNOG" id="ENOG502TDZY">
    <property type="taxonomic scope" value="Eukaryota"/>
</dbReference>
<dbReference type="GeneTree" id="ENSGT00390000009363"/>
<dbReference type="HOGENOM" id="CLU_165590_0_0_1"/>
<dbReference type="InParanoid" id="Q9JJB1"/>
<dbReference type="OMA" id="HDCAGSL"/>
<dbReference type="OrthoDB" id="9631427at2759"/>
<dbReference type="TreeFam" id="TF339530"/>
<dbReference type="BioGRID-ORCS" id="224019">
    <property type="hits" value="2 hits in 77 CRISPR screens"/>
</dbReference>
<dbReference type="ChiTaRS" id="Tmem191c">
    <property type="organism name" value="mouse"/>
</dbReference>
<dbReference type="PRO" id="PR:Q9JJB1"/>
<dbReference type="Proteomes" id="UP000000589">
    <property type="component" value="Chromosome 16"/>
</dbReference>
<dbReference type="RNAct" id="Q9JJB1">
    <property type="molecule type" value="protein"/>
</dbReference>
<dbReference type="Bgee" id="ENSMUSG00000055692">
    <property type="expression patterns" value="Expressed in utricle of membranous labyrinth and 209 other cell types or tissues"/>
</dbReference>
<dbReference type="ExpressionAtlas" id="Q9JJB1">
    <property type="expression patterns" value="baseline and differential"/>
</dbReference>
<dbReference type="GO" id="GO:0016020">
    <property type="term" value="C:membrane"/>
    <property type="evidence" value="ECO:0007669"/>
    <property type="project" value="UniProtKB-SubCell"/>
</dbReference>
<dbReference type="InterPro" id="IPR028186">
    <property type="entry name" value="TMEM191B/C"/>
</dbReference>
<dbReference type="PANTHER" id="PTHR38498">
    <property type="entry name" value="TRANSMEMBRANE PROTEIN 191B-RELATED"/>
    <property type="match status" value="1"/>
</dbReference>
<dbReference type="PANTHER" id="PTHR38498:SF1">
    <property type="entry name" value="TRANSMEMBRANE PROTEIN 191B-RELATED"/>
    <property type="match status" value="1"/>
</dbReference>
<dbReference type="Pfam" id="PF15194">
    <property type="entry name" value="TMEM191C"/>
    <property type="match status" value="1"/>
</dbReference>
<organism>
    <name type="scientific">Mus musculus</name>
    <name type="common">Mouse</name>
    <dbReference type="NCBI Taxonomy" id="10090"/>
    <lineage>
        <taxon>Eukaryota</taxon>
        <taxon>Metazoa</taxon>
        <taxon>Chordata</taxon>
        <taxon>Craniata</taxon>
        <taxon>Vertebrata</taxon>
        <taxon>Euteleostomi</taxon>
        <taxon>Mammalia</taxon>
        <taxon>Eutheria</taxon>
        <taxon>Euarchontoglires</taxon>
        <taxon>Glires</taxon>
        <taxon>Rodentia</taxon>
        <taxon>Myomorpha</taxon>
        <taxon>Muroidea</taxon>
        <taxon>Muridae</taxon>
        <taxon>Murinae</taxon>
        <taxon>Mus</taxon>
        <taxon>Mus</taxon>
    </lineage>
</organism>
<comment type="subcellular location">
    <subcellularLocation>
        <location evidence="1">Membrane</location>
        <topology evidence="1">Single-pass membrane protein</topology>
    </subcellularLocation>
</comment>
<comment type="alternative products">
    <event type="alternative splicing"/>
    <isoform>
        <id>Q9JJB1-1</id>
        <name evidence="3">1</name>
        <sequence type="displayed"/>
    </isoform>
    <isoform>
        <id>Q9JJB1-2</id>
        <name evidence="3">2</name>
        <sequence type="described" ref="VSP_057637"/>
    </isoform>
</comment>
<comment type="similarity">
    <text evidence="3">Belongs to the TMEM191 family.</text>
</comment>
<protein>
    <recommendedName>
        <fullName evidence="4">Transmembrane protein 191</fullName>
    </recommendedName>
    <alternativeName>
        <fullName evidence="4">Transmembrane protein 191c</fullName>
    </alternativeName>
</protein>
<reference key="1">
    <citation type="submission" date="2000-04" db="EMBL/GenBank/DDBJ databases">
        <title>Isolation of full-length cDNA clones from mouse brain cDNA library made by oligo-capping method.</title>
        <authorList>
            <person name="Osada N."/>
            <person name="Kusuda J."/>
            <person name="Tanuma R."/>
            <person name="Ito A."/>
            <person name="Hirata M."/>
            <person name="Sugano S."/>
            <person name="Hashimoto K."/>
        </authorList>
    </citation>
    <scope>NUCLEOTIDE SEQUENCE [LARGE SCALE MRNA] (ISOFORM 2)</scope>
    <source>
        <strain>C57BL/6J</strain>
        <tissue>Brain</tissue>
    </source>
</reference>
<reference key="2">
    <citation type="journal article" date="2009" name="PLoS Biol.">
        <title>Lineage-specific biology revealed by a finished genome assembly of the mouse.</title>
        <authorList>
            <person name="Church D.M."/>
            <person name="Goodstadt L."/>
            <person name="Hillier L.W."/>
            <person name="Zody M.C."/>
            <person name="Goldstein S."/>
            <person name="She X."/>
            <person name="Bult C.J."/>
            <person name="Agarwala R."/>
            <person name="Cherry J.L."/>
            <person name="DiCuccio M."/>
            <person name="Hlavina W."/>
            <person name="Kapustin Y."/>
            <person name="Meric P."/>
            <person name="Maglott D."/>
            <person name="Birtle Z."/>
            <person name="Marques A.C."/>
            <person name="Graves T."/>
            <person name="Zhou S."/>
            <person name="Teague B."/>
            <person name="Potamousis K."/>
            <person name="Churas C."/>
            <person name="Place M."/>
            <person name="Herschleb J."/>
            <person name="Runnheim R."/>
            <person name="Forrest D."/>
            <person name="Amos-Landgraf J."/>
            <person name="Schwartz D.C."/>
            <person name="Cheng Z."/>
            <person name="Lindblad-Toh K."/>
            <person name="Eichler E.E."/>
            <person name="Ponting C.P."/>
        </authorList>
    </citation>
    <scope>NUCLEOTIDE SEQUENCE [LARGE SCALE GENOMIC DNA]</scope>
    <source>
        <strain>C57BL/6J</strain>
    </source>
</reference>
<reference key="3">
    <citation type="journal article" date="2010" name="Cell">
        <title>A tissue-specific atlas of mouse protein phosphorylation and expression.</title>
        <authorList>
            <person name="Huttlin E.L."/>
            <person name="Jedrychowski M.P."/>
            <person name="Elias J.E."/>
            <person name="Goswami T."/>
            <person name="Rad R."/>
            <person name="Beausoleil S.A."/>
            <person name="Villen J."/>
            <person name="Haas W."/>
            <person name="Sowa M.E."/>
            <person name="Gygi S.P."/>
        </authorList>
    </citation>
    <scope>IDENTIFICATION BY MASS SPECTROMETRY [LARGE SCALE ANALYSIS]</scope>
    <source>
        <tissue>Testis</tissue>
    </source>
</reference>
<gene>
    <name evidence="4" type="primary">Tmem191</name>
    <name evidence="4" type="synonym">Tmem191c</name>
    <name type="ORF">MNCb-4137</name>
</gene>
<evidence type="ECO:0000255" key="1"/>
<evidence type="ECO:0000256" key="2">
    <source>
        <dbReference type="SAM" id="MobiDB-lite"/>
    </source>
</evidence>
<evidence type="ECO:0000305" key="3"/>
<evidence type="ECO:0000312" key="4">
    <source>
        <dbReference type="MGI" id="MGI:107238"/>
    </source>
</evidence>
<proteinExistence type="evidence at protein level"/>
<name>T191_MOUSE</name>
<feature type="chain" id="PRO_0000340718" description="Transmembrane protein 191">
    <location>
        <begin position="1"/>
        <end position="302"/>
    </location>
</feature>
<feature type="transmembrane region" description="Helical" evidence="1">
    <location>
        <begin position="242"/>
        <end position="262"/>
    </location>
</feature>
<feature type="region of interest" description="Disordered" evidence="2">
    <location>
        <begin position="39"/>
        <end position="66"/>
    </location>
</feature>
<feature type="coiled-coil region" evidence="1">
    <location>
        <begin position="5"/>
        <end position="147"/>
    </location>
</feature>
<feature type="compositionally biased region" description="Basic and acidic residues" evidence="2">
    <location>
        <begin position="42"/>
        <end position="53"/>
    </location>
</feature>
<feature type="splice variant" id="VSP_057637" description="In isoform 2.">
    <location>
        <begin position="1"/>
        <end position="181"/>
    </location>
</feature>
<accession>Q9JJB1</accession>
<accession>E9Q1C2</accession>